<feature type="chain" id="PRO_1000092653" description="Ribosomal RNA small subunit methyltransferase G">
    <location>
        <begin position="1"/>
        <end position="207"/>
    </location>
</feature>
<feature type="binding site" evidence="1">
    <location>
        <position position="73"/>
    </location>
    <ligand>
        <name>S-adenosyl-L-methionine</name>
        <dbReference type="ChEBI" id="CHEBI:59789"/>
    </ligand>
</feature>
<feature type="binding site" evidence="1">
    <location>
        <position position="78"/>
    </location>
    <ligand>
        <name>S-adenosyl-L-methionine</name>
        <dbReference type="ChEBI" id="CHEBI:59789"/>
    </ligand>
</feature>
<feature type="binding site" evidence="1">
    <location>
        <begin position="124"/>
        <end position="125"/>
    </location>
    <ligand>
        <name>S-adenosyl-L-methionine</name>
        <dbReference type="ChEBI" id="CHEBI:59789"/>
    </ligand>
</feature>
<feature type="binding site" evidence="1">
    <location>
        <position position="139"/>
    </location>
    <ligand>
        <name>S-adenosyl-L-methionine</name>
        <dbReference type="ChEBI" id="CHEBI:59789"/>
    </ligand>
</feature>
<name>RSMG_SHIB3</name>
<gene>
    <name evidence="1" type="primary">rsmG</name>
    <name type="ordered locus">SbBS512_E4181</name>
</gene>
<proteinExistence type="inferred from homology"/>
<dbReference type="EC" id="2.1.1.170" evidence="1"/>
<dbReference type="EMBL" id="CP001063">
    <property type="protein sequence ID" value="ACD08438.1"/>
    <property type="molecule type" value="Genomic_DNA"/>
</dbReference>
<dbReference type="RefSeq" id="WP_000932839.1">
    <property type="nucleotide sequence ID" value="NC_010658.1"/>
</dbReference>
<dbReference type="SMR" id="B2TUN5"/>
<dbReference type="STRING" id="344609.SbBS512_E4181"/>
<dbReference type="GeneID" id="93778227"/>
<dbReference type="KEGG" id="sbc:SbBS512_E4181"/>
<dbReference type="HOGENOM" id="CLU_065341_2_2_6"/>
<dbReference type="Proteomes" id="UP000001030">
    <property type="component" value="Chromosome"/>
</dbReference>
<dbReference type="GO" id="GO:0005829">
    <property type="term" value="C:cytosol"/>
    <property type="evidence" value="ECO:0007669"/>
    <property type="project" value="TreeGrafter"/>
</dbReference>
<dbReference type="GO" id="GO:0070043">
    <property type="term" value="F:rRNA (guanine-N7-)-methyltransferase activity"/>
    <property type="evidence" value="ECO:0007669"/>
    <property type="project" value="UniProtKB-UniRule"/>
</dbReference>
<dbReference type="CDD" id="cd02440">
    <property type="entry name" value="AdoMet_MTases"/>
    <property type="match status" value="1"/>
</dbReference>
<dbReference type="FunFam" id="3.40.50.150:FF:000032">
    <property type="entry name" value="Ribosomal RNA small subunit methyltransferase G"/>
    <property type="match status" value="1"/>
</dbReference>
<dbReference type="Gene3D" id="3.40.50.150">
    <property type="entry name" value="Vaccinia Virus protein VP39"/>
    <property type="match status" value="1"/>
</dbReference>
<dbReference type="HAMAP" id="MF_00074">
    <property type="entry name" value="16SrRNA_methyltr_G"/>
    <property type="match status" value="1"/>
</dbReference>
<dbReference type="InterPro" id="IPR003682">
    <property type="entry name" value="rRNA_ssu_MeTfrase_G"/>
</dbReference>
<dbReference type="InterPro" id="IPR029063">
    <property type="entry name" value="SAM-dependent_MTases_sf"/>
</dbReference>
<dbReference type="NCBIfam" id="TIGR00138">
    <property type="entry name" value="rsmG_gidB"/>
    <property type="match status" value="1"/>
</dbReference>
<dbReference type="PANTHER" id="PTHR31760">
    <property type="entry name" value="S-ADENOSYL-L-METHIONINE-DEPENDENT METHYLTRANSFERASES SUPERFAMILY PROTEIN"/>
    <property type="match status" value="1"/>
</dbReference>
<dbReference type="PANTHER" id="PTHR31760:SF0">
    <property type="entry name" value="S-ADENOSYL-L-METHIONINE-DEPENDENT METHYLTRANSFERASES SUPERFAMILY PROTEIN"/>
    <property type="match status" value="1"/>
</dbReference>
<dbReference type="Pfam" id="PF02527">
    <property type="entry name" value="GidB"/>
    <property type="match status" value="1"/>
</dbReference>
<dbReference type="PIRSF" id="PIRSF003078">
    <property type="entry name" value="GidB"/>
    <property type="match status" value="1"/>
</dbReference>
<dbReference type="SUPFAM" id="SSF53335">
    <property type="entry name" value="S-adenosyl-L-methionine-dependent methyltransferases"/>
    <property type="match status" value="1"/>
</dbReference>
<sequence>MLNKLSLLLKDAGISLTDHQKNQLIAYVNMLHKWNKAYNLTSVRDPNEMLVRHILDSIVVAPYLQGERFIDVGTGPGLPGIPLSIVRPEAHFTLLDSLGKRVRFLRQVQHELKLENIEPVQSRVEEFPSEPPFDGVISRAFASLNDMVSWCHHLPGEQGRFYALKGQMPEDEIALLPEEYQVESVVKLQVPALDGERHLVVIKANKI</sequence>
<reference key="1">
    <citation type="submission" date="2008-05" db="EMBL/GenBank/DDBJ databases">
        <title>Complete sequence of Shigella boydii serotype 18 strain BS512.</title>
        <authorList>
            <person name="Rasko D.A."/>
            <person name="Rosovitz M."/>
            <person name="Maurelli A.T."/>
            <person name="Myers G."/>
            <person name="Seshadri R."/>
            <person name="Cer R."/>
            <person name="Jiang L."/>
            <person name="Ravel J."/>
            <person name="Sebastian Y."/>
        </authorList>
    </citation>
    <scope>NUCLEOTIDE SEQUENCE [LARGE SCALE GENOMIC DNA]</scope>
    <source>
        <strain>CDC 3083-94 / BS512</strain>
    </source>
</reference>
<accession>B2TUN5</accession>
<organism>
    <name type="scientific">Shigella boydii serotype 18 (strain CDC 3083-94 / BS512)</name>
    <dbReference type="NCBI Taxonomy" id="344609"/>
    <lineage>
        <taxon>Bacteria</taxon>
        <taxon>Pseudomonadati</taxon>
        <taxon>Pseudomonadota</taxon>
        <taxon>Gammaproteobacteria</taxon>
        <taxon>Enterobacterales</taxon>
        <taxon>Enterobacteriaceae</taxon>
        <taxon>Shigella</taxon>
    </lineage>
</organism>
<evidence type="ECO:0000255" key="1">
    <source>
        <dbReference type="HAMAP-Rule" id="MF_00074"/>
    </source>
</evidence>
<comment type="function">
    <text evidence="1">Specifically methylates the N7 position of guanine in position 527 of 16S rRNA.</text>
</comment>
<comment type="catalytic activity">
    <reaction evidence="1">
        <text>guanosine(527) in 16S rRNA + S-adenosyl-L-methionine = N(7)-methylguanosine(527) in 16S rRNA + S-adenosyl-L-homocysteine</text>
        <dbReference type="Rhea" id="RHEA:42732"/>
        <dbReference type="Rhea" id="RHEA-COMP:10209"/>
        <dbReference type="Rhea" id="RHEA-COMP:10210"/>
        <dbReference type="ChEBI" id="CHEBI:57856"/>
        <dbReference type="ChEBI" id="CHEBI:59789"/>
        <dbReference type="ChEBI" id="CHEBI:74269"/>
        <dbReference type="ChEBI" id="CHEBI:74480"/>
        <dbReference type="EC" id="2.1.1.170"/>
    </reaction>
</comment>
<comment type="subcellular location">
    <subcellularLocation>
        <location evidence="1">Cytoplasm</location>
    </subcellularLocation>
</comment>
<comment type="similarity">
    <text evidence="1">Belongs to the methyltransferase superfamily. RNA methyltransferase RsmG family.</text>
</comment>
<protein>
    <recommendedName>
        <fullName evidence="1">Ribosomal RNA small subunit methyltransferase G</fullName>
        <ecNumber evidence="1">2.1.1.170</ecNumber>
    </recommendedName>
    <alternativeName>
        <fullName evidence="1">16S rRNA 7-methylguanosine methyltransferase</fullName>
        <shortName evidence="1">16S rRNA m7G methyltransferase</shortName>
    </alternativeName>
</protein>
<keyword id="KW-0963">Cytoplasm</keyword>
<keyword id="KW-0489">Methyltransferase</keyword>
<keyword id="KW-1185">Reference proteome</keyword>
<keyword id="KW-0698">rRNA processing</keyword>
<keyword id="KW-0949">S-adenosyl-L-methionine</keyword>
<keyword id="KW-0808">Transferase</keyword>